<organism>
    <name type="scientific">Homo sapiens</name>
    <name type="common">Human</name>
    <dbReference type="NCBI Taxonomy" id="9606"/>
    <lineage>
        <taxon>Eukaryota</taxon>
        <taxon>Metazoa</taxon>
        <taxon>Chordata</taxon>
        <taxon>Craniata</taxon>
        <taxon>Vertebrata</taxon>
        <taxon>Euteleostomi</taxon>
        <taxon>Mammalia</taxon>
        <taxon>Eutheria</taxon>
        <taxon>Euarchontoglires</taxon>
        <taxon>Primates</taxon>
        <taxon>Haplorrhini</taxon>
        <taxon>Catarrhini</taxon>
        <taxon>Hominidae</taxon>
        <taxon>Homo</taxon>
    </lineage>
</organism>
<comment type="function">
    <text>May participate in the maintenance of segment identity in the hindbrain and pituitary development, and maturation or maintenance of the overall structure of the nervous system. May function as a regulatory subunit of ion channels.</text>
</comment>
<comment type="alternative products">
    <event type="alternative splicing"/>
    <isoform>
        <id>Q16517-1</id>
        <name>Alpha</name>
        <sequence type="displayed"/>
    </isoform>
    <isoform>
        <id>Q16517-2</id>
        <name>Beta</name>
        <sequence type="described" ref="VSP_004331"/>
    </isoform>
</comment>
<comment type="developmental stage">
    <text>Abundant in 18-24 week old fetal brain. Postnatally its expression decline and only minimal levels were present in adulthood.</text>
</comment>
<comment type="similarity">
    <text evidence="2">Belongs to the neuronatin family.</text>
</comment>
<evidence type="ECO:0000303" key="1">
    <source>
    </source>
</evidence>
<evidence type="ECO:0000305" key="2"/>
<name>NNAT_HUMAN</name>
<reference key="1">
    <citation type="journal article" date="1996" name="Brain Res.">
        <title>Cloning of human neuronatin gene and its localization to chromosome-20q 11.2-12: the deduced protein is a novel 'proteolipid'.</title>
        <authorList>
            <person name="Dou D."/>
            <person name="Joseph R."/>
        </authorList>
    </citation>
    <scope>NUCLEOTIDE SEQUENCE [MRNA] (ISOFORMS ALPHA AND BETA)</scope>
    <source>
        <tissue>Fetal brain</tissue>
        <tissue>Placenta</tissue>
    </source>
</reference>
<reference key="2">
    <citation type="journal article" date="1996" name="Genomics">
        <title>Structure and organization of the human neuronatin gene.</title>
        <authorList>
            <person name="Dou D."/>
            <person name="Joseph R."/>
        </authorList>
    </citation>
    <scope>NUCLEOTIDE SEQUENCE [GENOMIC DNA]</scope>
    <scope>ALTERNATIVE SPLICING</scope>
    <source>
        <tissue>Placenta</tissue>
    </source>
</reference>
<reference key="3">
    <citation type="journal article" date="1997" name="J. Mol. Neurosci.">
        <title>cDNA cloning and mRNA expression analysis of the human neuronatin. High level expression in human pituitary gland and pituitary adenomas.</title>
        <authorList>
            <person name="Usui H."/>
            <person name="Morii K."/>
            <person name="Tanaka R."/>
            <person name="Tamura T."/>
            <person name="Washiyama K."/>
            <person name="Ichikawa T."/>
            <person name="Kumanishi T."/>
        </authorList>
    </citation>
    <scope>NUCLEOTIDE SEQUENCE [MRNA] (ISOFORM ALPHA)</scope>
    <source>
        <tissue>Pituitary adenoma</tissue>
    </source>
</reference>
<reference key="4">
    <citation type="journal article" date="2004" name="Nat. Genet.">
        <title>Complete sequencing and characterization of 21,243 full-length human cDNAs.</title>
        <authorList>
            <person name="Ota T."/>
            <person name="Suzuki Y."/>
            <person name="Nishikawa T."/>
            <person name="Otsuki T."/>
            <person name="Sugiyama T."/>
            <person name="Irie R."/>
            <person name="Wakamatsu A."/>
            <person name="Hayashi K."/>
            <person name="Sato H."/>
            <person name="Nagai K."/>
            <person name="Kimura K."/>
            <person name="Makita H."/>
            <person name="Sekine M."/>
            <person name="Obayashi M."/>
            <person name="Nishi T."/>
            <person name="Shibahara T."/>
            <person name="Tanaka T."/>
            <person name="Ishii S."/>
            <person name="Yamamoto J."/>
            <person name="Saito K."/>
            <person name="Kawai Y."/>
            <person name="Isono Y."/>
            <person name="Nakamura Y."/>
            <person name="Nagahari K."/>
            <person name="Murakami K."/>
            <person name="Yasuda T."/>
            <person name="Iwayanagi T."/>
            <person name="Wagatsuma M."/>
            <person name="Shiratori A."/>
            <person name="Sudo H."/>
            <person name="Hosoiri T."/>
            <person name="Kaku Y."/>
            <person name="Kodaira H."/>
            <person name="Kondo H."/>
            <person name="Sugawara M."/>
            <person name="Takahashi M."/>
            <person name="Kanda K."/>
            <person name="Yokoi T."/>
            <person name="Furuya T."/>
            <person name="Kikkawa E."/>
            <person name="Omura Y."/>
            <person name="Abe K."/>
            <person name="Kamihara K."/>
            <person name="Katsuta N."/>
            <person name="Sato K."/>
            <person name="Tanikawa M."/>
            <person name="Yamazaki M."/>
            <person name="Ninomiya K."/>
            <person name="Ishibashi T."/>
            <person name="Yamashita H."/>
            <person name="Murakawa K."/>
            <person name="Fujimori K."/>
            <person name="Tanai H."/>
            <person name="Kimata M."/>
            <person name="Watanabe M."/>
            <person name="Hiraoka S."/>
            <person name="Chiba Y."/>
            <person name="Ishida S."/>
            <person name="Ono Y."/>
            <person name="Takiguchi S."/>
            <person name="Watanabe S."/>
            <person name="Yosida M."/>
            <person name="Hotuta T."/>
            <person name="Kusano J."/>
            <person name="Kanehori K."/>
            <person name="Takahashi-Fujii A."/>
            <person name="Hara H."/>
            <person name="Tanase T.-O."/>
            <person name="Nomura Y."/>
            <person name="Togiya S."/>
            <person name="Komai F."/>
            <person name="Hara R."/>
            <person name="Takeuchi K."/>
            <person name="Arita M."/>
            <person name="Imose N."/>
            <person name="Musashino K."/>
            <person name="Yuuki H."/>
            <person name="Oshima A."/>
            <person name="Sasaki N."/>
            <person name="Aotsuka S."/>
            <person name="Yoshikawa Y."/>
            <person name="Matsunawa H."/>
            <person name="Ichihara T."/>
            <person name="Shiohata N."/>
            <person name="Sano S."/>
            <person name="Moriya S."/>
            <person name="Momiyama H."/>
            <person name="Satoh N."/>
            <person name="Takami S."/>
            <person name="Terashima Y."/>
            <person name="Suzuki O."/>
            <person name="Nakagawa S."/>
            <person name="Senoh A."/>
            <person name="Mizoguchi H."/>
            <person name="Goto Y."/>
            <person name="Shimizu F."/>
            <person name="Wakebe H."/>
            <person name="Hishigaki H."/>
            <person name="Watanabe T."/>
            <person name="Sugiyama A."/>
            <person name="Takemoto M."/>
            <person name="Kawakami B."/>
            <person name="Yamazaki M."/>
            <person name="Watanabe K."/>
            <person name="Kumagai A."/>
            <person name="Itakura S."/>
            <person name="Fukuzumi Y."/>
            <person name="Fujimori Y."/>
            <person name="Komiyama M."/>
            <person name="Tashiro H."/>
            <person name="Tanigami A."/>
            <person name="Fujiwara T."/>
            <person name="Ono T."/>
            <person name="Yamada K."/>
            <person name="Fujii Y."/>
            <person name="Ozaki K."/>
            <person name="Hirao M."/>
            <person name="Ohmori Y."/>
            <person name="Kawabata A."/>
            <person name="Hikiji T."/>
            <person name="Kobatake N."/>
            <person name="Inagaki H."/>
            <person name="Ikema Y."/>
            <person name="Okamoto S."/>
            <person name="Okitani R."/>
            <person name="Kawakami T."/>
            <person name="Noguchi S."/>
            <person name="Itoh T."/>
            <person name="Shigeta K."/>
            <person name="Senba T."/>
            <person name="Matsumura K."/>
            <person name="Nakajima Y."/>
            <person name="Mizuno T."/>
            <person name="Morinaga M."/>
            <person name="Sasaki M."/>
            <person name="Togashi T."/>
            <person name="Oyama M."/>
            <person name="Hata H."/>
            <person name="Watanabe M."/>
            <person name="Komatsu T."/>
            <person name="Mizushima-Sugano J."/>
            <person name="Satoh T."/>
            <person name="Shirai Y."/>
            <person name="Takahashi Y."/>
            <person name="Nakagawa K."/>
            <person name="Okumura K."/>
            <person name="Nagase T."/>
            <person name="Nomura N."/>
            <person name="Kikuchi H."/>
            <person name="Masuho Y."/>
            <person name="Yamashita R."/>
            <person name="Nakai K."/>
            <person name="Yada T."/>
            <person name="Nakamura Y."/>
            <person name="Ohara O."/>
            <person name="Isogai T."/>
            <person name="Sugano S."/>
        </authorList>
    </citation>
    <scope>NUCLEOTIDE SEQUENCE [LARGE SCALE MRNA] (ISOFORM ALPHA)</scope>
</reference>
<reference key="5">
    <citation type="submission" date="2004-10" db="EMBL/GenBank/DDBJ databases">
        <title>Cloning of human full-length CDSs in BD Creator(TM) system donor vector.</title>
        <authorList>
            <person name="Kalnine N."/>
            <person name="Chen X."/>
            <person name="Rolfs A."/>
            <person name="Halleck A."/>
            <person name="Hines L."/>
            <person name="Eisenstein S."/>
            <person name="Koundinya M."/>
            <person name="Raphael J."/>
            <person name="Moreira D."/>
            <person name="Kelley T."/>
            <person name="LaBaer J."/>
            <person name="Lin Y."/>
            <person name="Phelan M."/>
            <person name="Farmer A."/>
        </authorList>
    </citation>
    <scope>NUCLEOTIDE SEQUENCE [LARGE SCALE MRNA] (ISOFORM ALPHA)</scope>
</reference>
<reference key="6">
    <citation type="journal article" date="2001" name="Nature">
        <title>The DNA sequence and comparative analysis of human chromosome 20.</title>
        <authorList>
            <person name="Deloukas P."/>
            <person name="Matthews L.H."/>
            <person name="Ashurst J.L."/>
            <person name="Burton J."/>
            <person name="Gilbert J.G.R."/>
            <person name="Jones M."/>
            <person name="Stavrides G."/>
            <person name="Almeida J.P."/>
            <person name="Babbage A.K."/>
            <person name="Bagguley C.L."/>
            <person name="Bailey J."/>
            <person name="Barlow K.F."/>
            <person name="Bates K.N."/>
            <person name="Beard L.M."/>
            <person name="Beare D.M."/>
            <person name="Beasley O.P."/>
            <person name="Bird C.P."/>
            <person name="Blakey S.E."/>
            <person name="Bridgeman A.M."/>
            <person name="Brown A.J."/>
            <person name="Buck D."/>
            <person name="Burrill W.D."/>
            <person name="Butler A.P."/>
            <person name="Carder C."/>
            <person name="Carter N.P."/>
            <person name="Chapman J.C."/>
            <person name="Clamp M."/>
            <person name="Clark G."/>
            <person name="Clark L.N."/>
            <person name="Clark S.Y."/>
            <person name="Clee C.M."/>
            <person name="Clegg S."/>
            <person name="Cobley V.E."/>
            <person name="Collier R.E."/>
            <person name="Connor R.E."/>
            <person name="Corby N.R."/>
            <person name="Coulson A."/>
            <person name="Coville G.J."/>
            <person name="Deadman R."/>
            <person name="Dhami P.D."/>
            <person name="Dunn M."/>
            <person name="Ellington A.G."/>
            <person name="Frankland J.A."/>
            <person name="Fraser A."/>
            <person name="French L."/>
            <person name="Garner P."/>
            <person name="Grafham D.V."/>
            <person name="Griffiths C."/>
            <person name="Griffiths M.N.D."/>
            <person name="Gwilliam R."/>
            <person name="Hall R.E."/>
            <person name="Hammond S."/>
            <person name="Harley J.L."/>
            <person name="Heath P.D."/>
            <person name="Ho S."/>
            <person name="Holden J.L."/>
            <person name="Howden P.J."/>
            <person name="Huckle E."/>
            <person name="Hunt A.R."/>
            <person name="Hunt S.E."/>
            <person name="Jekosch K."/>
            <person name="Johnson C.M."/>
            <person name="Johnson D."/>
            <person name="Kay M.P."/>
            <person name="Kimberley A.M."/>
            <person name="King A."/>
            <person name="Knights A."/>
            <person name="Laird G.K."/>
            <person name="Lawlor S."/>
            <person name="Lehvaeslaiho M.H."/>
            <person name="Leversha M.A."/>
            <person name="Lloyd C."/>
            <person name="Lloyd D.M."/>
            <person name="Lovell J.D."/>
            <person name="Marsh V.L."/>
            <person name="Martin S.L."/>
            <person name="McConnachie L.J."/>
            <person name="McLay K."/>
            <person name="McMurray A.A."/>
            <person name="Milne S.A."/>
            <person name="Mistry D."/>
            <person name="Moore M.J.F."/>
            <person name="Mullikin J.C."/>
            <person name="Nickerson T."/>
            <person name="Oliver K."/>
            <person name="Parker A."/>
            <person name="Patel R."/>
            <person name="Pearce T.A.V."/>
            <person name="Peck A.I."/>
            <person name="Phillimore B.J.C.T."/>
            <person name="Prathalingam S.R."/>
            <person name="Plumb R.W."/>
            <person name="Ramsay H."/>
            <person name="Rice C.M."/>
            <person name="Ross M.T."/>
            <person name="Scott C.E."/>
            <person name="Sehra H.K."/>
            <person name="Shownkeen R."/>
            <person name="Sims S."/>
            <person name="Skuce C.D."/>
            <person name="Smith M.L."/>
            <person name="Soderlund C."/>
            <person name="Steward C.A."/>
            <person name="Sulston J.E."/>
            <person name="Swann R.M."/>
            <person name="Sycamore N."/>
            <person name="Taylor R."/>
            <person name="Tee L."/>
            <person name="Thomas D.W."/>
            <person name="Thorpe A."/>
            <person name="Tracey A."/>
            <person name="Tromans A.C."/>
            <person name="Vaudin M."/>
            <person name="Wall M."/>
            <person name="Wallis J.M."/>
            <person name="Whitehead S.L."/>
            <person name="Whittaker P."/>
            <person name="Willey D.L."/>
            <person name="Williams L."/>
            <person name="Williams S.A."/>
            <person name="Wilming L."/>
            <person name="Wray P.W."/>
            <person name="Hubbard T."/>
            <person name="Durbin R.M."/>
            <person name="Bentley D.R."/>
            <person name="Beck S."/>
            <person name="Rogers J."/>
        </authorList>
    </citation>
    <scope>NUCLEOTIDE SEQUENCE [LARGE SCALE GENOMIC DNA]</scope>
</reference>
<reference key="7">
    <citation type="submission" date="2005-09" db="EMBL/GenBank/DDBJ databases">
        <authorList>
            <person name="Mural R.J."/>
            <person name="Istrail S."/>
            <person name="Sutton G.G."/>
            <person name="Florea L."/>
            <person name="Halpern A.L."/>
            <person name="Mobarry C.M."/>
            <person name="Lippert R."/>
            <person name="Walenz B."/>
            <person name="Shatkay H."/>
            <person name="Dew I."/>
            <person name="Miller J.R."/>
            <person name="Flanigan M.J."/>
            <person name="Edwards N.J."/>
            <person name="Bolanos R."/>
            <person name="Fasulo D."/>
            <person name="Halldorsson B.V."/>
            <person name="Hannenhalli S."/>
            <person name="Turner R."/>
            <person name="Yooseph S."/>
            <person name="Lu F."/>
            <person name="Nusskern D.R."/>
            <person name="Shue B.C."/>
            <person name="Zheng X.H."/>
            <person name="Zhong F."/>
            <person name="Delcher A.L."/>
            <person name="Huson D.H."/>
            <person name="Kravitz S.A."/>
            <person name="Mouchard L."/>
            <person name="Reinert K."/>
            <person name="Remington K.A."/>
            <person name="Clark A.G."/>
            <person name="Waterman M.S."/>
            <person name="Eichler E.E."/>
            <person name="Adams M.D."/>
            <person name="Hunkapiller M.W."/>
            <person name="Myers E.W."/>
            <person name="Venter J.C."/>
        </authorList>
    </citation>
    <scope>NUCLEOTIDE SEQUENCE [LARGE SCALE GENOMIC DNA]</scope>
</reference>
<reference key="8">
    <citation type="journal article" date="2004" name="Genome Res.">
        <title>The status, quality, and expansion of the NIH full-length cDNA project: the Mammalian Gene Collection (MGC).</title>
        <authorList>
            <consortium name="The MGC Project Team"/>
        </authorList>
    </citation>
    <scope>NUCLEOTIDE SEQUENCE [LARGE SCALE MRNA] (ISOFORM ALPHA)</scope>
    <source>
        <tissue>Eye</tissue>
    </source>
</reference>
<keyword id="KW-0025">Alternative splicing</keyword>
<keyword id="KW-0217">Developmental protein</keyword>
<keyword id="KW-1185">Reference proteome</keyword>
<dbReference type="EMBL" id="U25033">
    <property type="protein sequence ID" value="AAA93224.1"/>
    <property type="molecule type" value="mRNA"/>
</dbReference>
<dbReference type="EMBL" id="U25034">
    <property type="protein sequence ID" value="AAA93225.1"/>
    <property type="molecule type" value="mRNA"/>
</dbReference>
<dbReference type="EMBL" id="U31767">
    <property type="protein sequence ID" value="AAC50627.1"/>
    <property type="molecule type" value="Genomic_DNA"/>
</dbReference>
<dbReference type="EMBL" id="U31767">
    <property type="protein sequence ID" value="AAC50626.1"/>
    <property type="molecule type" value="Genomic_DNA"/>
</dbReference>
<dbReference type="EMBL" id="AB002392">
    <property type="protein sequence ID" value="BAA25016.1"/>
    <property type="molecule type" value="mRNA"/>
</dbReference>
<dbReference type="EMBL" id="AK312069">
    <property type="protein sequence ID" value="BAG35005.1"/>
    <property type="molecule type" value="mRNA"/>
</dbReference>
<dbReference type="EMBL" id="BT019426">
    <property type="protein sequence ID" value="AAV38233.1"/>
    <property type="molecule type" value="mRNA"/>
</dbReference>
<dbReference type="EMBL" id="AL109614">
    <property type="status" value="NOT_ANNOTATED_CDS"/>
    <property type="molecule type" value="Genomic_DNA"/>
</dbReference>
<dbReference type="EMBL" id="CH471077">
    <property type="protein sequence ID" value="EAW76059.1"/>
    <property type="molecule type" value="Genomic_DNA"/>
</dbReference>
<dbReference type="EMBL" id="CH471077">
    <property type="protein sequence ID" value="EAW76060.1"/>
    <property type="molecule type" value="Genomic_DNA"/>
</dbReference>
<dbReference type="EMBL" id="BC001768">
    <property type="protein sequence ID" value="AAH01768.1"/>
    <property type="molecule type" value="mRNA"/>
</dbReference>
<dbReference type="CCDS" id="CCDS13296.1">
    <molecule id="Q16517-1"/>
</dbReference>
<dbReference type="CCDS" id="CCDS13297.1">
    <molecule id="Q16517-2"/>
</dbReference>
<dbReference type="PIR" id="G01783">
    <property type="entry name" value="G01783"/>
</dbReference>
<dbReference type="RefSeq" id="NP_001309731.1">
    <property type="nucleotide sequence ID" value="NM_001322802.1"/>
</dbReference>
<dbReference type="RefSeq" id="NP_005377.1">
    <molecule id="Q16517-1"/>
    <property type="nucleotide sequence ID" value="NM_005386.4"/>
</dbReference>
<dbReference type="RefSeq" id="NP_859017.1">
    <molecule id="Q16517-2"/>
    <property type="nucleotide sequence ID" value="NM_181689.3"/>
</dbReference>
<dbReference type="SMR" id="Q16517"/>
<dbReference type="BioGRID" id="110890">
    <property type="interactions" value="3"/>
</dbReference>
<dbReference type="FunCoup" id="Q16517">
    <property type="interactions" value="48"/>
</dbReference>
<dbReference type="IntAct" id="Q16517">
    <property type="interactions" value="1"/>
</dbReference>
<dbReference type="STRING" id="9606.ENSP00000497164"/>
<dbReference type="TCDB" id="1.A.50.7.1">
    <property type="family name" value="the phospholamban (ca(2+)-channel and ca(2+)-atpase regulator) (plb) family"/>
</dbReference>
<dbReference type="iPTMnet" id="Q16517"/>
<dbReference type="PhosphoSitePlus" id="Q16517"/>
<dbReference type="BioMuta" id="NNAT"/>
<dbReference type="MassIVE" id="Q16517"/>
<dbReference type="PaxDb" id="9606-ENSP00000062104"/>
<dbReference type="PeptideAtlas" id="Q16517"/>
<dbReference type="TopDownProteomics" id="Q16517-1">
    <molecule id="Q16517-1"/>
</dbReference>
<dbReference type="Antibodypedia" id="26750">
    <property type="antibodies" value="53 antibodies from 15 providers"/>
</dbReference>
<dbReference type="DNASU" id="4826"/>
<dbReference type="Ensembl" id="ENST00000346199.3">
    <molecule id="Q16517-2"/>
    <property type="protein sequence ID" value="ENSP00000335497.2"/>
    <property type="gene ID" value="ENSG00000053438.11"/>
</dbReference>
<dbReference type="Ensembl" id="ENST00000649451.1">
    <molecule id="Q16517-1"/>
    <property type="protein sequence ID" value="ENSP00000497164.1"/>
    <property type="gene ID" value="ENSG00000053438.11"/>
</dbReference>
<dbReference type="GeneID" id="4826"/>
<dbReference type="KEGG" id="hsa:4826"/>
<dbReference type="MANE-Select" id="ENST00000649451.1">
    <property type="protein sequence ID" value="ENSP00000497164.1"/>
    <property type="RefSeq nucleotide sequence ID" value="NM_005386.4"/>
    <property type="RefSeq protein sequence ID" value="NP_005377.1"/>
</dbReference>
<dbReference type="UCSC" id="uc002xhd.4">
    <molecule id="Q16517-1"/>
    <property type="organism name" value="human"/>
</dbReference>
<dbReference type="AGR" id="HGNC:7860"/>
<dbReference type="CTD" id="4826"/>
<dbReference type="DisGeNET" id="4826"/>
<dbReference type="GeneCards" id="NNAT"/>
<dbReference type="HGNC" id="HGNC:7860">
    <property type="gene designation" value="NNAT"/>
</dbReference>
<dbReference type="HPA" id="ENSG00000053438">
    <property type="expression patterns" value="Group enriched (brain, pituitary gland)"/>
</dbReference>
<dbReference type="MIM" id="603106">
    <property type="type" value="gene"/>
</dbReference>
<dbReference type="neXtProt" id="NX_Q16517"/>
<dbReference type="OpenTargets" id="ENSG00000053438"/>
<dbReference type="PharmGKB" id="PA31665"/>
<dbReference type="VEuPathDB" id="HostDB:ENSG00000053438"/>
<dbReference type="eggNOG" id="ENOG502TDP2">
    <property type="taxonomic scope" value="Eukaryota"/>
</dbReference>
<dbReference type="GeneTree" id="ENSGT00390000007412"/>
<dbReference type="HOGENOM" id="CLU_152636_0_0_1"/>
<dbReference type="InParanoid" id="Q16517"/>
<dbReference type="OMA" id="IAENECI"/>
<dbReference type="OrthoDB" id="9823442at2759"/>
<dbReference type="PAN-GO" id="Q16517">
    <property type="GO annotations" value="3 GO annotations based on evolutionary models"/>
</dbReference>
<dbReference type="PhylomeDB" id="Q16517"/>
<dbReference type="TreeFam" id="TF338710"/>
<dbReference type="PathwayCommons" id="Q16517"/>
<dbReference type="SignaLink" id="Q16517"/>
<dbReference type="BioGRID-ORCS" id="4826">
    <property type="hits" value="7 hits in 1140 CRISPR screens"/>
</dbReference>
<dbReference type="ChiTaRS" id="NNAT">
    <property type="organism name" value="human"/>
</dbReference>
<dbReference type="GenomeRNAi" id="4826"/>
<dbReference type="Pharos" id="Q16517">
    <property type="development level" value="Tbio"/>
</dbReference>
<dbReference type="PRO" id="PR:Q16517"/>
<dbReference type="Proteomes" id="UP000005640">
    <property type="component" value="Chromosome 20"/>
</dbReference>
<dbReference type="RNAct" id="Q16517">
    <property type="molecule type" value="protein"/>
</dbReference>
<dbReference type="Bgee" id="ENSG00000053438">
    <property type="expression patterns" value="Expressed in ganglionic eminence and 180 other cell types or tissues"/>
</dbReference>
<dbReference type="ExpressionAtlas" id="Q16517">
    <property type="expression patterns" value="baseline and differential"/>
</dbReference>
<dbReference type="GO" id="GO:0005737">
    <property type="term" value="C:cytoplasm"/>
    <property type="evidence" value="ECO:0000318"/>
    <property type="project" value="GO_Central"/>
</dbReference>
<dbReference type="GO" id="GO:0007420">
    <property type="term" value="P:brain development"/>
    <property type="evidence" value="ECO:0000304"/>
    <property type="project" value="ProtInc"/>
</dbReference>
<dbReference type="GO" id="GO:0032024">
    <property type="term" value="P:positive regulation of insulin secretion"/>
    <property type="evidence" value="ECO:0000318"/>
    <property type="project" value="GO_Central"/>
</dbReference>
<dbReference type="GO" id="GO:0009249">
    <property type="term" value="P:protein lipoylation"/>
    <property type="evidence" value="ECO:0000304"/>
    <property type="project" value="ProtInc"/>
</dbReference>
<dbReference type="InterPro" id="IPR024885">
    <property type="entry name" value="Neuronatin"/>
</dbReference>
<dbReference type="PANTHER" id="PTHR15285">
    <property type="entry name" value="NEURONATIN"/>
    <property type="match status" value="1"/>
</dbReference>
<dbReference type="PANTHER" id="PTHR15285:SF0">
    <property type="entry name" value="NEURONATIN"/>
    <property type="match status" value="1"/>
</dbReference>
<gene>
    <name type="primary">NNAT</name>
</gene>
<protein>
    <recommendedName>
        <fullName>Neuronatin</fullName>
    </recommendedName>
</protein>
<proteinExistence type="evidence at transcript level"/>
<feature type="chain" id="PRO_0000096882" description="Neuronatin">
    <location>
        <begin position="1"/>
        <end position="81"/>
    </location>
</feature>
<feature type="splice variant" id="VSP_004331" description="In isoform Beta." evidence="1">
    <location>
        <begin position="25"/>
        <end position="51"/>
    </location>
</feature>
<feature type="sequence conflict" description="In Ref. 5; AAV38233." evidence="2" ref="5">
    <original>V</original>
    <variation>L</variation>
    <location>
        <position position="64"/>
    </location>
</feature>
<sequence>MAAVAAASAELLIIGWYIFRVLLQVFLECCIYWVGFAFRNPPGTQPIARSEVFRYSLQKLAYTVSRTGRQVLGERRQRAPN</sequence>
<accession>Q16517</accession>
<accession>B2R558</accession>
<accession>E1P5V6</accession>
<accession>Q16596</accession>
<accession>Q5U0N3</accession>